<accession>Q03VU7</accession>
<dbReference type="EMBL" id="CP000414">
    <property type="protein sequence ID" value="ABJ62675.1"/>
    <property type="molecule type" value="Genomic_DNA"/>
</dbReference>
<dbReference type="RefSeq" id="WP_002815336.1">
    <property type="nucleotide sequence ID" value="NC_008531.1"/>
</dbReference>
<dbReference type="SMR" id="Q03VU7"/>
<dbReference type="EnsemblBacteria" id="ABJ62675">
    <property type="protein sequence ID" value="ABJ62675"/>
    <property type="gene ID" value="LEUM_1583"/>
</dbReference>
<dbReference type="GeneID" id="97503434"/>
<dbReference type="KEGG" id="lme:LEUM_1583"/>
<dbReference type="eggNOG" id="COG0268">
    <property type="taxonomic scope" value="Bacteria"/>
</dbReference>
<dbReference type="HOGENOM" id="CLU_160655_1_1_9"/>
<dbReference type="Proteomes" id="UP000000362">
    <property type="component" value="Chromosome"/>
</dbReference>
<dbReference type="GO" id="GO:0005829">
    <property type="term" value="C:cytosol"/>
    <property type="evidence" value="ECO:0007669"/>
    <property type="project" value="TreeGrafter"/>
</dbReference>
<dbReference type="GO" id="GO:0015935">
    <property type="term" value="C:small ribosomal subunit"/>
    <property type="evidence" value="ECO:0007669"/>
    <property type="project" value="TreeGrafter"/>
</dbReference>
<dbReference type="GO" id="GO:0070181">
    <property type="term" value="F:small ribosomal subunit rRNA binding"/>
    <property type="evidence" value="ECO:0007669"/>
    <property type="project" value="TreeGrafter"/>
</dbReference>
<dbReference type="GO" id="GO:0003735">
    <property type="term" value="F:structural constituent of ribosome"/>
    <property type="evidence" value="ECO:0007669"/>
    <property type="project" value="InterPro"/>
</dbReference>
<dbReference type="GO" id="GO:0006412">
    <property type="term" value="P:translation"/>
    <property type="evidence" value="ECO:0007669"/>
    <property type="project" value="UniProtKB-UniRule"/>
</dbReference>
<dbReference type="Gene3D" id="1.20.58.110">
    <property type="entry name" value="Ribosomal protein S20"/>
    <property type="match status" value="1"/>
</dbReference>
<dbReference type="HAMAP" id="MF_00500">
    <property type="entry name" value="Ribosomal_bS20"/>
    <property type="match status" value="1"/>
</dbReference>
<dbReference type="InterPro" id="IPR002583">
    <property type="entry name" value="Ribosomal_bS20"/>
</dbReference>
<dbReference type="InterPro" id="IPR036510">
    <property type="entry name" value="Ribosomal_bS20_sf"/>
</dbReference>
<dbReference type="NCBIfam" id="TIGR00029">
    <property type="entry name" value="S20"/>
    <property type="match status" value="1"/>
</dbReference>
<dbReference type="PANTHER" id="PTHR33398">
    <property type="entry name" value="30S RIBOSOMAL PROTEIN S20"/>
    <property type="match status" value="1"/>
</dbReference>
<dbReference type="PANTHER" id="PTHR33398:SF1">
    <property type="entry name" value="SMALL RIBOSOMAL SUBUNIT PROTEIN BS20C"/>
    <property type="match status" value="1"/>
</dbReference>
<dbReference type="Pfam" id="PF01649">
    <property type="entry name" value="Ribosomal_S20p"/>
    <property type="match status" value="1"/>
</dbReference>
<dbReference type="SUPFAM" id="SSF46992">
    <property type="entry name" value="Ribosomal protein S20"/>
    <property type="match status" value="1"/>
</dbReference>
<proteinExistence type="inferred from homology"/>
<organism>
    <name type="scientific">Leuconostoc mesenteroides subsp. mesenteroides (strain ATCC 8293 / DSM 20343 / BCRC 11652 / CCM 1803 / JCM 6124 / NCDO 523 / NBRC 100496 / NCIMB 8023 / NCTC 12954 / NRRL B-1118 / 37Y)</name>
    <dbReference type="NCBI Taxonomy" id="203120"/>
    <lineage>
        <taxon>Bacteria</taxon>
        <taxon>Bacillati</taxon>
        <taxon>Bacillota</taxon>
        <taxon>Bacilli</taxon>
        <taxon>Lactobacillales</taxon>
        <taxon>Lactobacillaceae</taxon>
        <taxon>Leuconostoc</taxon>
    </lineage>
</organism>
<reference key="1">
    <citation type="journal article" date="2006" name="Proc. Natl. Acad. Sci. U.S.A.">
        <title>Comparative genomics of the lactic acid bacteria.</title>
        <authorList>
            <person name="Makarova K.S."/>
            <person name="Slesarev A."/>
            <person name="Wolf Y.I."/>
            <person name="Sorokin A."/>
            <person name="Mirkin B."/>
            <person name="Koonin E.V."/>
            <person name="Pavlov A."/>
            <person name="Pavlova N."/>
            <person name="Karamychev V."/>
            <person name="Polouchine N."/>
            <person name="Shakhova V."/>
            <person name="Grigoriev I."/>
            <person name="Lou Y."/>
            <person name="Rohksar D."/>
            <person name="Lucas S."/>
            <person name="Huang K."/>
            <person name="Goodstein D.M."/>
            <person name="Hawkins T."/>
            <person name="Plengvidhya V."/>
            <person name="Welker D."/>
            <person name="Hughes J."/>
            <person name="Goh Y."/>
            <person name="Benson A."/>
            <person name="Baldwin K."/>
            <person name="Lee J.-H."/>
            <person name="Diaz-Muniz I."/>
            <person name="Dosti B."/>
            <person name="Smeianov V."/>
            <person name="Wechter W."/>
            <person name="Barabote R."/>
            <person name="Lorca G."/>
            <person name="Altermann E."/>
            <person name="Barrangou R."/>
            <person name="Ganesan B."/>
            <person name="Xie Y."/>
            <person name="Rawsthorne H."/>
            <person name="Tamir D."/>
            <person name="Parker C."/>
            <person name="Breidt F."/>
            <person name="Broadbent J.R."/>
            <person name="Hutkins R."/>
            <person name="O'Sullivan D."/>
            <person name="Steele J."/>
            <person name="Unlu G."/>
            <person name="Saier M.H. Jr."/>
            <person name="Klaenhammer T."/>
            <person name="Richardson P."/>
            <person name="Kozyavkin S."/>
            <person name="Weimer B.C."/>
            <person name="Mills D.A."/>
        </authorList>
    </citation>
    <scope>NUCLEOTIDE SEQUENCE [LARGE SCALE GENOMIC DNA]</scope>
    <source>
        <strain>ATCC 8293 / DSM 20343 / BCRC 11652 / CCM 1803 / JCM 6124 / NCDO 523 / NBRC 100496 / NCIMB 8023 / NCTC 12954 / NRRL B-1118 / 37Y</strain>
    </source>
</reference>
<name>RS20_LEUMM</name>
<sequence>MPVIESAIQRVRLTKKQHDRNEPQLSAYRTAVKKFEKAAAAGTDNLAELYKAASSAIDHAYSKGLIKKNKASREKSRLAKYVK</sequence>
<feature type="chain" id="PRO_1000126472" description="Small ribosomal subunit protein bS20">
    <location>
        <begin position="1"/>
        <end position="83"/>
    </location>
</feature>
<keyword id="KW-1185">Reference proteome</keyword>
<keyword id="KW-0687">Ribonucleoprotein</keyword>
<keyword id="KW-0689">Ribosomal protein</keyword>
<keyword id="KW-0694">RNA-binding</keyword>
<keyword id="KW-0699">rRNA-binding</keyword>
<gene>
    <name evidence="1" type="primary">rpsT</name>
    <name type="ordered locus">LEUM_1583</name>
</gene>
<evidence type="ECO:0000255" key="1">
    <source>
        <dbReference type="HAMAP-Rule" id="MF_00500"/>
    </source>
</evidence>
<evidence type="ECO:0000305" key="2"/>
<protein>
    <recommendedName>
        <fullName evidence="1">Small ribosomal subunit protein bS20</fullName>
    </recommendedName>
    <alternativeName>
        <fullName evidence="2">30S ribosomal protein S20</fullName>
    </alternativeName>
</protein>
<comment type="function">
    <text evidence="1">Binds directly to 16S ribosomal RNA.</text>
</comment>
<comment type="similarity">
    <text evidence="1">Belongs to the bacterial ribosomal protein bS20 family.</text>
</comment>